<sequence>AEFERTFIAIKPDGVQRGLISEIVARFERKGFSLVAIKVVIPSRPFAQKHYADLKDKPFYVGLVAYWSSGPVVAMVWEGEGVIKYGRKLIGATDPQKSEPGTIRGDLAVVNGRNIIHGSDGPETAKDEIKLWFKPEELVNYTHNAEKWIYGDN</sequence>
<name>NDK3_SPIOL</name>
<comment type="function">
    <text>Major role in the synthesis of nucleoside triphosphates other than ATP. The ATP gamma phosphate is transferred to the NDP beta phosphate via a ping-pong mechanism, using a phosphorylated active-site intermediate. Shows the highest specificity towards GDP.</text>
</comment>
<comment type="catalytic activity">
    <reaction>
        <text>a 2'-deoxyribonucleoside 5'-diphosphate + ATP = a 2'-deoxyribonucleoside 5'-triphosphate + ADP</text>
        <dbReference type="Rhea" id="RHEA:44640"/>
        <dbReference type="ChEBI" id="CHEBI:30616"/>
        <dbReference type="ChEBI" id="CHEBI:61560"/>
        <dbReference type="ChEBI" id="CHEBI:73316"/>
        <dbReference type="ChEBI" id="CHEBI:456216"/>
        <dbReference type="EC" id="2.7.4.6"/>
    </reaction>
</comment>
<comment type="catalytic activity">
    <reaction>
        <text>a ribonucleoside 5'-diphosphate + ATP = a ribonucleoside 5'-triphosphate + ADP</text>
        <dbReference type="Rhea" id="RHEA:18113"/>
        <dbReference type="ChEBI" id="CHEBI:30616"/>
        <dbReference type="ChEBI" id="CHEBI:57930"/>
        <dbReference type="ChEBI" id="CHEBI:61557"/>
        <dbReference type="ChEBI" id="CHEBI:456216"/>
        <dbReference type="EC" id="2.7.4.6"/>
    </reaction>
</comment>
<comment type="cofactor">
    <cofactor evidence="1">
        <name>Mg(2+)</name>
        <dbReference type="ChEBI" id="CHEBI:18420"/>
    </cofactor>
</comment>
<comment type="biophysicochemical properties">
    <kinetics>
        <KM>27.4 uM for GDP</KM>
        <KM>89.05 uM for ADP</KM>
    </kinetics>
    <phDependence>
        <text>Optimum pH is 6.0.</text>
    </phDependence>
</comment>
<comment type="subunit">
    <text evidence="4">Homohexamer.</text>
</comment>
<comment type="subcellular location">
    <subcellularLocation>
        <location evidence="2 3">Plastid</location>
        <location evidence="2 3">Chloroplast thylakoid lumen</location>
    </subcellularLocation>
</comment>
<comment type="similarity">
    <text evidence="4">Belongs to the NDK family.</text>
</comment>
<comment type="caution">
    <text evidence="4">There are likely two genes coding for two slightly different proteins, NDK3 and NDK4. The characterization was made on a thylakoid lumen preparation containing probably both proteins.</text>
</comment>
<accession>P81766</accession>
<reference key="1">
    <citation type="journal article" date="1995" name="Biochim. Biophys. Acta">
        <title>A third type of nucleoside diphosphate kinase from spinach leaves: purification, characterization and amino-acid sequence.</title>
        <authorList>
            <person name="Zhang J."/>
            <person name="Fukui T."/>
            <person name="Ichikawa A."/>
        </authorList>
    </citation>
    <scope>PROTEIN SEQUENCE</scope>
    <scope>CHARACTERIZATION</scope>
    <source>
        <tissue>Leaf</tissue>
    </source>
</reference>
<reference key="2">
    <citation type="journal article" date="2004" name="Proc. Natl. Acad. Sci. U.S.A.">
        <title>Multiple evidence for nucleotide metabolism in the chloroplast thylakoid lumen.</title>
        <authorList>
            <person name="Spetea C."/>
            <person name="Hundal T."/>
            <person name="Lundin B."/>
            <person name="Heddad M."/>
            <person name="Adamska I."/>
            <person name="Andersson B."/>
        </authorList>
    </citation>
    <scope>SUBCELLULAR LOCATION</scope>
    <scope>CHARACTERIZATION</scope>
</reference>
<reference key="3">
    <citation type="journal article" date="1996" name="Biochim. Biophys. Acta">
        <title>Rapid purification of a chloroplast nucleoside diphosphate kinase using CoA-affinity chromatography.</title>
        <authorList>
            <person name="Yang L.M."/>
            <person name="Lamppa G.K."/>
        </authorList>
    </citation>
    <scope>PROTEIN SEQUENCE OF 1-19</scope>
    <scope>SUBCELLULAR LOCATION</scope>
</reference>
<feature type="chain" id="PRO_0000137146" description="Nucleoside diphosphate kinase 3">
    <location>
        <begin position="1"/>
        <end position="153"/>
    </location>
</feature>
<feature type="active site" description="Pros-phosphohistidine intermediate" evidence="1">
    <location>
        <position position="117"/>
    </location>
</feature>
<feature type="binding site" evidence="1">
    <location>
        <position position="11"/>
    </location>
    <ligand>
        <name>ATP</name>
        <dbReference type="ChEBI" id="CHEBI:30616"/>
    </ligand>
</feature>
<feature type="binding site" evidence="1">
    <location>
        <position position="59"/>
    </location>
    <ligand>
        <name>ATP</name>
        <dbReference type="ChEBI" id="CHEBI:30616"/>
    </ligand>
</feature>
<feature type="binding site" evidence="1">
    <location>
        <position position="87"/>
    </location>
    <ligand>
        <name>ATP</name>
        <dbReference type="ChEBI" id="CHEBI:30616"/>
    </ligand>
</feature>
<feature type="binding site" evidence="1">
    <location>
        <position position="93"/>
    </location>
    <ligand>
        <name>ATP</name>
        <dbReference type="ChEBI" id="CHEBI:30616"/>
    </ligand>
</feature>
<feature type="binding site" evidence="1">
    <location>
        <position position="104"/>
    </location>
    <ligand>
        <name>ATP</name>
        <dbReference type="ChEBI" id="CHEBI:30616"/>
    </ligand>
</feature>
<feature type="binding site" evidence="1">
    <location>
        <position position="114"/>
    </location>
    <ligand>
        <name>ATP</name>
        <dbReference type="ChEBI" id="CHEBI:30616"/>
    </ligand>
</feature>
<protein>
    <recommendedName>
        <fullName>Nucleoside diphosphate kinase 3</fullName>
        <ecNumber>2.7.4.6</ecNumber>
    </recommendedName>
    <alternativeName>
        <fullName>Nucleoside diphosphate kinase III</fullName>
        <shortName>NDK III</shortName>
        <shortName>NDP kinase III</shortName>
        <shortName>NDPK III</shortName>
    </alternativeName>
</protein>
<proteinExistence type="evidence at protein level"/>
<evidence type="ECO:0000250" key="1"/>
<evidence type="ECO:0000269" key="2">
    <source>
    </source>
</evidence>
<evidence type="ECO:0000269" key="3">
    <source>
    </source>
</evidence>
<evidence type="ECO:0000305" key="4"/>
<keyword id="KW-0067">ATP-binding</keyword>
<keyword id="KW-0150">Chloroplast</keyword>
<keyword id="KW-0903">Direct protein sequencing</keyword>
<keyword id="KW-0418">Kinase</keyword>
<keyword id="KW-0460">Magnesium</keyword>
<keyword id="KW-0479">Metal-binding</keyword>
<keyword id="KW-0546">Nucleotide metabolism</keyword>
<keyword id="KW-0547">Nucleotide-binding</keyword>
<keyword id="KW-0597">Phosphoprotein</keyword>
<keyword id="KW-0934">Plastid</keyword>
<keyword id="KW-1185">Reference proteome</keyword>
<keyword id="KW-0793">Thylakoid</keyword>
<keyword id="KW-0808">Transferase</keyword>
<organism>
    <name type="scientific">Spinacia oleracea</name>
    <name type="common">Spinach</name>
    <dbReference type="NCBI Taxonomy" id="3562"/>
    <lineage>
        <taxon>Eukaryota</taxon>
        <taxon>Viridiplantae</taxon>
        <taxon>Streptophyta</taxon>
        <taxon>Embryophyta</taxon>
        <taxon>Tracheophyta</taxon>
        <taxon>Spermatophyta</taxon>
        <taxon>Magnoliopsida</taxon>
        <taxon>eudicotyledons</taxon>
        <taxon>Gunneridae</taxon>
        <taxon>Pentapetalae</taxon>
        <taxon>Caryophyllales</taxon>
        <taxon>Chenopodiaceae</taxon>
        <taxon>Chenopodioideae</taxon>
        <taxon>Anserineae</taxon>
        <taxon>Spinacia</taxon>
    </lineage>
</organism>
<dbReference type="EC" id="2.7.4.6"/>
<dbReference type="PIR" id="S60363">
    <property type="entry name" value="S60363"/>
</dbReference>
<dbReference type="SMR" id="P81766"/>
<dbReference type="IntAct" id="P81766">
    <property type="interactions" value="1"/>
</dbReference>
<dbReference type="Proteomes" id="UP001155700">
    <property type="component" value="Unplaced"/>
</dbReference>
<dbReference type="GO" id="GO:0009543">
    <property type="term" value="C:chloroplast thylakoid lumen"/>
    <property type="evidence" value="ECO:0007669"/>
    <property type="project" value="UniProtKB-SubCell"/>
</dbReference>
<dbReference type="GO" id="GO:0005524">
    <property type="term" value="F:ATP binding"/>
    <property type="evidence" value="ECO:0007669"/>
    <property type="project" value="UniProtKB-KW"/>
</dbReference>
<dbReference type="GO" id="GO:0046872">
    <property type="term" value="F:metal ion binding"/>
    <property type="evidence" value="ECO:0007669"/>
    <property type="project" value="UniProtKB-KW"/>
</dbReference>
<dbReference type="GO" id="GO:0004550">
    <property type="term" value="F:nucleoside diphosphate kinase activity"/>
    <property type="evidence" value="ECO:0007669"/>
    <property type="project" value="UniProtKB-EC"/>
</dbReference>
<dbReference type="GO" id="GO:0006241">
    <property type="term" value="P:CTP biosynthetic process"/>
    <property type="evidence" value="ECO:0007669"/>
    <property type="project" value="InterPro"/>
</dbReference>
<dbReference type="GO" id="GO:0006183">
    <property type="term" value="P:GTP biosynthetic process"/>
    <property type="evidence" value="ECO:0007669"/>
    <property type="project" value="InterPro"/>
</dbReference>
<dbReference type="GO" id="GO:0006228">
    <property type="term" value="P:UTP biosynthetic process"/>
    <property type="evidence" value="ECO:0007669"/>
    <property type="project" value="InterPro"/>
</dbReference>
<dbReference type="CDD" id="cd04413">
    <property type="entry name" value="NDPk_I"/>
    <property type="match status" value="1"/>
</dbReference>
<dbReference type="FunFam" id="3.30.70.141:FF:000005">
    <property type="entry name" value="Nucleoside diphosphate kinase"/>
    <property type="match status" value="1"/>
</dbReference>
<dbReference type="Gene3D" id="3.30.70.141">
    <property type="entry name" value="Nucleoside diphosphate kinase-like domain"/>
    <property type="match status" value="1"/>
</dbReference>
<dbReference type="HAMAP" id="MF_00451">
    <property type="entry name" value="NDP_kinase"/>
    <property type="match status" value="1"/>
</dbReference>
<dbReference type="InterPro" id="IPR034907">
    <property type="entry name" value="NDK-like_dom"/>
</dbReference>
<dbReference type="InterPro" id="IPR036850">
    <property type="entry name" value="NDK-like_dom_sf"/>
</dbReference>
<dbReference type="InterPro" id="IPR001564">
    <property type="entry name" value="Nucleoside_diP_kinase"/>
</dbReference>
<dbReference type="InterPro" id="IPR023005">
    <property type="entry name" value="Nucleoside_diP_kinase_AS"/>
</dbReference>
<dbReference type="NCBIfam" id="NF001908">
    <property type="entry name" value="PRK00668.1"/>
    <property type="match status" value="1"/>
</dbReference>
<dbReference type="PANTHER" id="PTHR11349">
    <property type="entry name" value="NUCLEOSIDE DIPHOSPHATE KINASE"/>
    <property type="match status" value="1"/>
</dbReference>
<dbReference type="Pfam" id="PF00334">
    <property type="entry name" value="NDK"/>
    <property type="match status" value="1"/>
</dbReference>
<dbReference type="PRINTS" id="PR01243">
    <property type="entry name" value="NUCDPKINASE"/>
</dbReference>
<dbReference type="SMART" id="SM00562">
    <property type="entry name" value="NDK"/>
    <property type="match status" value="1"/>
</dbReference>
<dbReference type="SUPFAM" id="SSF54919">
    <property type="entry name" value="Nucleoside diphosphate kinase, NDK"/>
    <property type="match status" value="1"/>
</dbReference>
<dbReference type="PROSITE" id="PS00469">
    <property type="entry name" value="NDPK"/>
    <property type="match status" value="1"/>
</dbReference>
<dbReference type="PROSITE" id="PS51374">
    <property type="entry name" value="NDPK_LIKE"/>
    <property type="match status" value="1"/>
</dbReference>